<evidence type="ECO:0000250" key="1">
    <source>
        <dbReference type="UniProtKB" id="P04798"/>
    </source>
</evidence>
<evidence type="ECO:0000255" key="2"/>
<evidence type="ECO:0000255" key="3">
    <source>
        <dbReference type="PROSITE-ProRule" id="PRU00498"/>
    </source>
</evidence>
<evidence type="ECO:0000269" key="4">
    <source>
    </source>
</evidence>
<evidence type="ECO:0000269" key="5">
    <source>
    </source>
</evidence>
<evidence type="ECO:0000269" key="6">
    <source>
    </source>
</evidence>
<evidence type="ECO:0000269" key="7">
    <source>
    </source>
</evidence>
<evidence type="ECO:0000303" key="8">
    <source>
    </source>
</evidence>
<evidence type="ECO:0000305" key="9"/>
<evidence type="ECO:0000305" key="10">
    <source>
    </source>
</evidence>
<evidence type="ECO:0000305" key="11">
    <source>
    </source>
</evidence>
<comment type="function">
    <text evidence="4 5 6 7 10 11">Cytochrome P450 monooxygenase; part of the gene cluster that mediates the biosynthesis of sirodesmin PL, an epipolythiodioxopiperazine (ETP) characterized by a disulfide bridged cyclic dipeptide and that acts as a phytotoxin which is involved in the blackleg didease of canola (PubMed:15387811, PubMed:18272357, PubMed:19762440). SirD catalyzes the O-prenylation of L-tyrosine (L-Tyr) in the presence of dimethylallyl diphosphate (DMAPP) to yield 4-O-dimethylallyl-L-Tyr, and therefore represents probably the first pathway-specific enzyme in the biosynthesis of sirodesmin PL (PubMed:19762440, PubMed:21038099, PubMed:24083562). 4-O-dimethylallyl-L-Tyr, then undergoes condensation with L-Ser in a reaction catalyzed by the non-ribosomal peptide synthase sirP to form the diketopiperazine (DKP) backbone (PubMed:18272357). Further bishydroxylation of the DKP performed by the cytochrome P450 monooxygenase sirC leads to the production of the intermediate phomamide (PubMed:27390873). This step is essential to form the reactive thiol group required for toxicity of sirodesmin PL (PubMed:27390873). The next steps of sirodesmin biosynthesis are not well understood yet, but some predictions could be made from intermediate compounds identification (PubMed:18272357). Phomamide is converted into phomalizarine via oxidation, probably by sirT (PubMed:18272357). Further oxidation, methylation (by sirM or sirN) and reduction steps convert phomalizarine to deacetyl sirodesmin (PubMed:18272357). Finally, acetyltransferase sirH probably acetylates deacetyl sirodesmin to produce sirodesmin PL (PubMed:18272357).</text>
</comment>
<comment type="cofactor">
    <cofactor evidence="1">
        <name>heme</name>
        <dbReference type="ChEBI" id="CHEBI:30413"/>
    </cofactor>
</comment>
<comment type="pathway">
    <text evidence="10">Mycotoxin biosynthesis.</text>
</comment>
<comment type="subcellular location">
    <subcellularLocation>
        <location evidence="2">Membrane</location>
        <topology evidence="2">Multi-pass membrane protein</topology>
    </subcellularLocation>
</comment>
<comment type="similarity">
    <text evidence="9">Belongs to the cytochrome P450 family.</text>
</comment>
<name>SIRB_LEPMC</name>
<proteinExistence type="inferred from homology"/>
<feature type="chain" id="PRO_0000437707" description="Cytochrome P450 monooxygenase sirB">
    <location>
        <begin position="1"/>
        <end position="522"/>
    </location>
</feature>
<feature type="transmembrane region" description="Helical" evidence="2">
    <location>
        <begin position="22"/>
        <end position="42"/>
    </location>
</feature>
<feature type="transmembrane region" description="Helical" evidence="2">
    <location>
        <begin position="304"/>
        <end position="324"/>
    </location>
</feature>
<feature type="binding site" description="axial binding residue" evidence="1">
    <location>
        <position position="462"/>
    </location>
    <ligand>
        <name>heme</name>
        <dbReference type="ChEBI" id="CHEBI:30413"/>
    </ligand>
    <ligandPart>
        <name>Fe</name>
        <dbReference type="ChEBI" id="CHEBI:18248"/>
    </ligandPart>
</feature>
<feature type="glycosylation site" description="N-linked (GlcNAc...) asparagine" evidence="3">
    <location>
        <position position="191"/>
    </location>
</feature>
<accession>Q6Q884</accession>
<organism>
    <name type="scientific">Leptosphaeria maculans</name>
    <name type="common">Blackleg fungus</name>
    <name type="synonym">Phoma lingam</name>
    <dbReference type="NCBI Taxonomy" id="5022"/>
    <lineage>
        <taxon>Eukaryota</taxon>
        <taxon>Fungi</taxon>
        <taxon>Dikarya</taxon>
        <taxon>Ascomycota</taxon>
        <taxon>Pezizomycotina</taxon>
        <taxon>Dothideomycetes</taxon>
        <taxon>Pleosporomycetidae</taxon>
        <taxon>Pleosporales</taxon>
        <taxon>Pleosporineae</taxon>
        <taxon>Leptosphaeriaceae</taxon>
        <taxon>Plenodomus</taxon>
        <taxon>Plenodomus lingam/Leptosphaeria maculans species complex</taxon>
    </lineage>
</organism>
<protein>
    <recommendedName>
        <fullName evidence="8">Cytochrome P450 monooxygenase sirB</fullName>
        <ecNumber evidence="10">1.-.-.-</ecNumber>
    </recommendedName>
    <alternativeName>
        <fullName evidence="8">Sirodesmin biosynthesis protein B</fullName>
    </alternativeName>
</protein>
<dbReference type="EC" id="1.-.-.-" evidence="10"/>
<dbReference type="EMBL" id="AY553235">
    <property type="protein sequence ID" value="AAS92544.1"/>
    <property type="molecule type" value="Genomic_DNA"/>
</dbReference>
<dbReference type="RefSeq" id="XP_003842422.1">
    <property type="nucleotide sequence ID" value="XM_003842374.1"/>
</dbReference>
<dbReference type="SMR" id="Q6Q884"/>
<dbReference type="GlyCosmos" id="Q6Q884">
    <property type="glycosylation" value="1 site, No reported glycans"/>
</dbReference>
<dbReference type="OMA" id="FLQFGYG"/>
<dbReference type="GO" id="GO:0016020">
    <property type="term" value="C:membrane"/>
    <property type="evidence" value="ECO:0007669"/>
    <property type="project" value="UniProtKB-SubCell"/>
</dbReference>
<dbReference type="GO" id="GO:0020037">
    <property type="term" value="F:heme binding"/>
    <property type="evidence" value="ECO:0007669"/>
    <property type="project" value="InterPro"/>
</dbReference>
<dbReference type="GO" id="GO:0005506">
    <property type="term" value="F:iron ion binding"/>
    <property type="evidence" value="ECO:0007669"/>
    <property type="project" value="InterPro"/>
</dbReference>
<dbReference type="GO" id="GO:0004497">
    <property type="term" value="F:monooxygenase activity"/>
    <property type="evidence" value="ECO:0007669"/>
    <property type="project" value="UniProtKB-KW"/>
</dbReference>
<dbReference type="GO" id="GO:0016705">
    <property type="term" value="F:oxidoreductase activity, acting on paired donors, with incorporation or reduction of molecular oxygen"/>
    <property type="evidence" value="ECO:0007669"/>
    <property type="project" value="InterPro"/>
</dbReference>
<dbReference type="GO" id="GO:0019748">
    <property type="term" value="P:secondary metabolic process"/>
    <property type="evidence" value="ECO:0007669"/>
    <property type="project" value="UniProtKB-ARBA"/>
</dbReference>
<dbReference type="CDD" id="cd11041">
    <property type="entry name" value="CYP503A1-like"/>
    <property type="match status" value="1"/>
</dbReference>
<dbReference type="Gene3D" id="1.10.630.10">
    <property type="entry name" value="Cytochrome P450"/>
    <property type="match status" value="1"/>
</dbReference>
<dbReference type="InterPro" id="IPR001128">
    <property type="entry name" value="Cyt_P450"/>
</dbReference>
<dbReference type="InterPro" id="IPR002403">
    <property type="entry name" value="Cyt_P450_E_grp-IV"/>
</dbReference>
<dbReference type="InterPro" id="IPR036396">
    <property type="entry name" value="Cyt_P450_sf"/>
</dbReference>
<dbReference type="PANTHER" id="PTHR46206">
    <property type="entry name" value="CYTOCHROME P450"/>
    <property type="match status" value="1"/>
</dbReference>
<dbReference type="PANTHER" id="PTHR46206:SF1">
    <property type="entry name" value="P450, PUTATIVE (EUROFUNG)-RELATED"/>
    <property type="match status" value="1"/>
</dbReference>
<dbReference type="Pfam" id="PF00067">
    <property type="entry name" value="p450"/>
    <property type="match status" value="1"/>
</dbReference>
<dbReference type="PRINTS" id="PR00465">
    <property type="entry name" value="EP450IV"/>
</dbReference>
<dbReference type="SUPFAM" id="SSF48264">
    <property type="entry name" value="Cytochrome P450"/>
    <property type="match status" value="1"/>
</dbReference>
<sequence length="522" mass="59129">MSTLQDFQIAPAILHRVTVRDASAILFCTLLTVFLFISQGTVRGVKRVGKSRLRTLVTGETPLRFDLEKYGYLGYQQFSKKANKPFLVKIYGLDHYVLPVKYLDSLKTVDHHRLSFAQSLNDFLNVDASLGDLVTHSDMEIAVVTKHLNPRLTTLTPVLVDEANFAFEKELGKLETWKTVNALFLSAFLTNRTSGRVLVGDLCRDDNYLHAMMKYTESVFSSGVAFNGIPLGPFRKIVYYLGARQHRRDLDNAAALVLPEIKRRMAAQAEDPNCRKENDAIQWNLDLPLASPKEGLPLRHAHRVLHLSFAATGTVAILITHMIYNVLMYPEYLEPLREEVMACTKAHGGWTEKAMNEMWKLDSFIRETLRVQPPSVFTAYRTVKNQPFTFPDGFTLPVGSRITFPTLPVGLDPENYESASEFDGFRFFRKREEARLAKKAYNWGATKIDSSFLPFGYGNQACPGRFFGVRKTKILFGKLINDYDFSWAEPRSARPENIVIEGQILVNPTPEIKIKSRVAAGM</sequence>
<gene>
    <name evidence="8" type="primary">sirB</name>
</gene>
<keyword id="KW-0325">Glycoprotein</keyword>
<keyword id="KW-0349">Heme</keyword>
<keyword id="KW-0408">Iron</keyword>
<keyword id="KW-0472">Membrane</keyword>
<keyword id="KW-0479">Metal-binding</keyword>
<keyword id="KW-0503">Monooxygenase</keyword>
<keyword id="KW-0560">Oxidoreductase</keyword>
<keyword id="KW-0812">Transmembrane</keyword>
<keyword id="KW-1133">Transmembrane helix</keyword>
<keyword id="KW-0843">Virulence</keyword>
<reference key="1">
    <citation type="journal article" date="2004" name="Mol. Microbiol.">
        <title>The sirodesmin biosynthetic gene cluster of the plant pathogenic fungus Leptosphaeria maculans.</title>
        <authorList>
            <person name="Gardiner D.M."/>
            <person name="Cozijnsen A.J."/>
            <person name="Wilson L.M."/>
            <person name="Pedras M.S."/>
            <person name="Howlett B.J."/>
        </authorList>
    </citation>
    <scope>NUCLEOTIDE SEQUENCE [GENOMIC DNA]</scope>
    <scope>FUNCTION</scope>
</reference>
<reference key="2">
    <citation type="journal article" date="2008" name="Mycol. Res.">
        <title>Biosynthetic gene clusters for epipolythiodioxopiperazines in filamentous fungi.</title>
        <authorList>
            <person name="Fox E.M."/>
            <person name="Howlett B.J."/>
        </authorList>
    </citation>
    <scope>FUNCTION</scope>
</reference>
<reference key="3">
    <citation type="journal article" date="2010" name="Microbiology">
        <title>A tyrosine O-prenyltransferase catalyses the first pathway-specific step in the biosynthesis of sirodesmin PL.</title>
        <authorList>
            <person name="Kremer A."/>
            <person name="Li S.M."/>
        </authorList>
    </citation>
    <scope>FUNCTION</scope>
</reference>
<reference key="4">
    <citation type="journal article" date="2011" name="Appl. Microbiol. Biotechnol.">
        <title>The tyrosine O-prenyltransferase SirD catalyzes O-, N-, and C-prenylations.</title>
        <authorList>
            <person name="Zou H.X."/>
            <person name="Xie X."/>
            <person name="Zheng X.D."/>
            <person name="Li S.M."/>
        </authorList>
    </citation>
    <scope>FUNCTION</scope>
</reference>
<reference key="5">
    <citation type="journal article" date="2013" name="ACS Chem. Biol.">
        <title>Tyrosine O-prenyltransferase SirD catalyzes S-, C-, and N-prenylations on tyrosine and tryptophan derivatives.</title>
        <authorList>
            <person name="Rudolf J.D."/>
            <person name="Poulter C.D."/>
        </authorList>
    </citation>
    <scope>FUNCTION</scope>
</reference>
<reference key="6">
    <citation type="journal article" date="2016" name="PLoS ONE">
        <title>The epipolythiodiketopiperazine gene cluster in Claviceps purpurea: dysfunctional cytochrome P450 enzyme prevents formation of the previously unknown clapurines.</title>
        <authorList>
            <person name="Dopstadt J."/>
            <person name="Neubauer L."/>
            <person name="Tudzynski P."/>
            <person name="Humpf H.U."/>
        </authorList>
    </citation>
    <scope>FUNCTION</scope>
</reference>